<evidence type="ECO:0000255" key="1">
    <source>
        <dbReference type="HAMAP-Rule" id="MF_00021"/>
    </source>
</evidence>
<protein>
    <recommendedName>
        <fullName evidence="1">Probable tRNA sulfurtransferase</fullName>
        <ecNumber evidence="1">2.8.1.4</ecNumber>
    </recommendedName>
    <alternativeName>
        <fullName evidence="1">Sulfur carrier protein ThiS sulfurtransferase</fullName>
    </alternativeName>
    <alternativeName>
        <fullName evidence="1">Thiamine biosynthesis protein ThiI</fullName>
    </alternativeName>
    <alternativeName>
        <fullName evidence="1">tRNA 4-thiouridine synthase</fullName>
    </alternativeName>
</protein>
<reference key="1">
    <citation type="journal article" date="2003" name="Proc. Natl. Acad. Sci. U.S.A.">
        <title>Complete genome sequence of Lactobacillus plantarum WCFS1.</title>
        <authorList>
            <person name="Kleerebezem M."/>
            <person name="Boekhorst J."/>
            <person name="van Kranenburg R."/>
            <person name="Molenaar D."/>
            <person name="Kuipers O.P."/>
            <person name="Leer R."/>
            <person name="Tarchini R."/>
            <person name="Peters S.A."/>
            <person name="Sandbrink H.M."/>
            <person name="Fiers M.W.E.J."/>
            <person name="Stiekema W."/>
            <person name="Klein Lankhorst R.M."/>
            <person name="Bron P.A."/>
            <person name="Hoffer S.M."/>
            <person name="Nierop Groot M.N."/>
            <person name="Kerkhoven R."/>
            <person name="De Vries M."/>
            <person name="Ursing B."/>
            <person name="De Vos W.M."/>
            <person name="Siezen R.J."/>
        </authorList>
    </citation>
    <scope>NUCLEOTIDE SEQUENCE [LARGE SCALE GENOMIC DNA]</scope>
    <source>
        <strain>ATCC BAA-793 / NCIMB 8826 / WCFS1</strain>
    </source>
</reference>
<reference key="2">
    <citation type="journal article" date="2012" name="J. Bacteriol.">
        <title>Complete resequencing and reannotation of the Lactobacillus plantarum WCFS1 genome.</title>
        <authorList>
            <person name="Siezen R.J."/>
            <person name="Francke C."/>
            <person name="Renckens B."/>
            <person name="Boekhorst J."/>
            <person name="Wels M."/>
            <person name="Kleerebezem M."/>
            <person name="van Hijum S.A."/>
        </authorList>
    </citation>
    <scope>NUCLEOTIDE SEQUENCE [LARGE SCALE GENOMIC DNA]</scope>
    <scope>GENOME REANNOTATION</scope>
    <source>
        <strain>ATCC BAA-793 / NCIMB 8826 / WCFS1</strain>
    </source>
</reference>
<dbReference type="EC" id="2.8.1.4" evidence="1"/>
<dbReference type="EMBL" id="AL935263">
    <property type="protein sequence ID" value="CCC79521.1"/>
    <property type="molecule type" value="Genomic_DNA"/>
</dbReference>
<dbReference type="RefSeq" id="WP_003641480.1">
    <property type="nucleotide sequence ID" value="NC_004567.2"/>
</dbReference>
<dbReference type="RefSeq" id="YP_004890035.1">
    <property type="nucleotide sequence ID" value="NC_004567.2"/>
</dbReference>
<dbReference type="SMR" id="Q88UX4"/>
<dbReference type="STRING" id="220668.lp_2325"/>
<dbReference type="EnsemblBacteria" id="CCC79521">
    <property type="protein sequence ID" value="CCC79521"/>
    <property type="gene ID" value="lp_2325"/>
</dbReference>
<dbReference type="GeneID" id="77215703"/>
<dbReference type="KEGG" id="lpl:lp_2325"/>
<dbReference type="PATRIC" id="fig|220668.9.peg.1966"/>
<dbReference type="eggNOG" id="COG0301">
    <property type="taxonomic scope" value="Bacteria"/>
</dbReference>
<dbReference type="HOGENOM" id="CLU_037952_4_0_9"/>
<dbReference type="OrthoDB" id="9773948at2"/>
<dbReference type="PhylomeDB" id="Q88UX4"/>
<dbReference type="UniPathway" id="UPA00060"/>
<dbReference type="Proteomes" id="UP000000432">
    <property type="component" value="Chromosome"/>
</dbReference>
<dbReference type="GO" id="GO:0005829">
    <property type="term" value="C:cytosol"/>
    <property type="evidence" value="ECO:0007669"/>
    <property type="project" value="TreeGrafter"/>
</dbReference>
<dbReference type="GO" id="GO:0005524">
    <property type="term" value="F:ATP binding"/>
    <property type="evidence" value="ECO:0007669"/>
    <property type="project" value="UniProtKB-UniRule"/>
</dbReference>
<dbReference type="GO" id="GO:0004810">
    <property type="term" value="F:CCA tRNA nucleotidyltransferase activity"/>
    <property type="evidence" value="ECO:0007669"/>
    <property type="project" value="InterPro"/>
</dbReference>
<dbReference type="GO" id="GO:0000049">
    <property type="term" value="F:tRNA binding"/>
    <property type="evidence" value="ECO:0007669"/>
    <property type="project" value="UniProtKB-UniRule"/>
</dbReference>
<dbReference type="GO" id="GO:0140741">
    <property type="term" value="F:tRNA-uracil-4 sulfurtransferase activity"/>
    <property type="evidence" value="ECO:0007669"/>
    <property type="project" value="UniProtKB-EC"/>
</dbReference>
<dbReference type="GO" id="GO:0009228">
    <property type="term" value="P:thiamine biosynthetic process"/>
    <property type="evidence" value="ECO:0007669"/>
    <property type="project" value="UniProtKB-KW"/>
</dbReference>
<dbReference type="GO" id="GO:0009229">
    <property type="term" value="P:thiamine diphosphate biosynthetic process"/>
    <property type="evidence" value="ECO:0007669"/>
    <property type="project" value="UniProtKB-UniRule"/>
</dbReference>
<dbReference type="GO" id="GO:0052837">
    <property type="term" value="P:thiazole biosynthetic process"/>
    <property type="evidence" value="ECO:0007669"/>
    <property type="project" value="TreeGrafter"/>
</dbReference>
<dbReference type="GO" id="GO:0002937">
    <property type="term" value="P:tRNA 4-thiouridine biosynthesis"/>
    <property type="evidence" value="ECO:0007669"/>
    <property type="project" value="TreeGrafter"/>
</dbReference>
<dbReference type="CDD" id="cd01712">
    <property type="entry name" value="PPase_ThiI"/>
    <property type="match status" value="1"/>
</dbReference>
<dbReference type="CDD" id="cd11716">
    <property type="entry name" value="THUMP_ThiI"/>
    <property type="match status" value="1"/>
</dbReference>
<dbReference type="FunFam" id="3.40.50.620:FF:000053">
    <property type="entry name" value="Probable tRNA sulfurtransferase"/>
    <property type="match status" value="1"/>
</dbReference>
<dbReference type="Gene3D" id="3.30.2130.30">
    <property type="match status" value="1"/>
</dbReference>
<dbReference type="Gene3D" id="3.40.50.620">
    <property type="entry name" value="HUPs"/>
    <property type="match status" value="1"/>
</dbReference>
<dbReference type="HAMAP" id="MF_00021">
    <property type="entry name" value="ThiI"/>
    <property type="match status" value="1"/>
</dbReference>
<dbReference type="InterPro" id="IPR014729">
    <property type="entry name" value="Rossmann-like_a/b/a_fold"/>
</dbReference>
<dbReference type="InterPro" id="IPR020536">
    <property type="entry name" value="ThiI_AANH"/>
</dbReference>
<dbReference type="InterPro" id="IPR054173">
    <property type="entry name" value="ThiI_fer"/>
</dbReference>
<dbReference type="InterPro" id="IPR049961">
    <property type="entry name" value="ThiI_N"/>
</dbReference>
<dbReference type="InterPro" id="IPR004114">
    <property type="entry name" value="THUMP_dom"/>
</dbReference>
<dbReference type="InterPro" id="IPR049962">
    <property type="entry name" value="THUMP_ThiI"/>
</dbReference>
<dbReference type="InterPro" id="IPR003720">
    <property type="entry name" value="tRNA_STrfase"/>
</dbReference>
<dbReference type="InterPro" id="IPR050102">
    <property type="entry name" value="tRNA_sulfurtransferase_ThiI"/>
</dbReference>
<dbReference type="NCBIfam" id="TIGR00342">
    <property type="entry name" value="tRNA uracil 4-sulfurtransferase ThiI"/>
    <property type="match status" value="1"/>
</dbReference>
<dbReference type="PANTHER" id="PTHR43209">
    <property type="entry name" value="TRNA SULFURTRANSFERASE"/>
    <property type="match status" value="1"/>
</dbReference>
<dbReference type="PANTHER" id="PTHR43209:SF1">
    <property type="entry name" value="TRNA SULFURTRANSFERASE"/>
    <property type="match status" value="1"/>
</dbReference>
<dbReference type="Pfam" id="PF02568">
    <property type="entry name" value="ThiI"/>
    <property type="match status" value="1"/>
</dbReference>
<dbReference type="Pfam" id="PF22025">
    <property type="entry name" value="ThiI_fer"/>
    <property type="match status" value="1"/>
</dbReference>
<dbReference type="Pfam" id="PF02926">
    <property type="entry name" value="THUMP"/>
    <property type="match status" value="1"/>
</dbReference>
<dbReference type="SMART" id="SM00981">
    <property type="entry name" value="THUMP"/>
    <property type="match status" value="1"/>
</dbReference>
<dbReference type="SUPFAM" id="SSF52402">
    <property type="entry name" value="Adenine nucleotide alpha hydrolases-like"/>
    <property type="match status" value="1"/>
</dbReference>
<dbReference type="SUPFAM" id="SSF143437">
    <property type="entry name" value="THUMP domain-like"/>
    <property type="match status" value="1"/>
</dbReference>
<dbReference type="PROSITE" id="PS51165">
    <property type="entry name" value="THUMP"/>
    <property type="match status" value="1"/>
</dbReference>
<gene>
    <name evidence="1" type="primary">thiI</name>
    <name type="ordered locus">lp_2325</name>
</gene>
<accession>Q88UX4</accession>
<accession>F9UQN2</accession>
<comment type="function">
    <text evidence="1">Catalyzes the ATP-dependent transfer of a sulfur to tRNA to produce 4-thiouridine in position 8 of tRNAs, which functions as a near-UV photosensor. Also catalyzes the transfer of sulfur to the sulfur carrier protein ThiS, forming ThiS-thiocarboxylate. This is a step in the synthesis of thiazole, in the thiamine biosynthesis pathway. The sulfur is donated as persulfide by IscS.</text>
</comment>
<comment type="catalytic activity">
    <reaction evidence="1">
        <text>[ThiI sulfur-carrier protein]-S-sulfanyl-L-cysteine + a uridine in tRNA + 2 reduced [2Fe-2S]-[ferredoxin] + ATP + H(+) = [ThiI sulfur-carrier protein]-L-cysteine + a 4-thiouridine in tRNA + 2 oxidized [2Fe-2S]-[ferredoxin] + AMP + diphosphate</text>
        <dbReference type="Rhea" id="RHEA:24176"/>
        <dbReference type="Rhea" id="RHEA-COMP:10000"/>
        <dbReference type="Rhea" id="RHEA-COMP:10001"/>
        <dbReference type="Rhea" id="RHEA-COMP:13337"/>
        <dbReference type="Rhea" id="RHEA-COMP:13338"/>
        <dbReference type="Rhea" id="RHEA-COMP:13339"/>
        <dbReference type="Rhea" id="RHEA-COMP:13340"/>
        <dbReference type="ChEBI" id="CHEBI:15378"/>
        <dbReference type="ChEBI" id="CHEBI:29950"/>
        <dbReference type="ChEBI" id="CHEBI:30616"/>
        <dbReference type="ChEBI" id="CHEBI:33019"/>
        <dbReference type="ChEBI" id="CHEBI:33737"/>
        <dbReference type="ChEBI" id="CHEBI:33738"/>
        <dbReference type="ChEBI" id="CHEBI:61963"/>
        <dbReference type="ChEBI" id="CHEBI:65315"/>
        <dbReference type="ChEBI" id="CHEBI:136798"/>
        <dbReference type="ChEBI" id="CHEBI:456215"/>
        <dbReference type="EC" id="2.8.1.4"/>
    </reaction>
</comment>
<comment type="catalytic activity">
    <reaction evidence="1">
        <text>[ThiS sulfur-carrier protein]-C-terminal Gly-Gly-AMP + S-sulfanyl-L-cysteinyl-[cysteine desulfurase] + AH2 = [ThiS sulfur-carrier protein]-C-terminal-Gly-aminoethanethioate + L-cysteinyl-[cysteine desulfurase] + A + AMP + 2 H(+)</text>
        <dbReference type="Rhea" id="RHEA:43340"/>
        <dbReference type="Rhea" id="RHEA-COMP:12157"/>
        <dbReference type="Rhea" id="RHEA-COMP:12158"/>
        <dbReference type="Rhea" id="RHEA-COMP:12910"/>
        <dbReference type="Rhea" id="RHEA-COMP:19908"/>
        <dbReference type="ChEBI" id="CHEBI:13193"/>
        <dbReference type="ChEBI" id="CHEBI:15378"/>
        <dbReference type="ChEBI" id="CHEBI:17499"/>
        <dbReference type="ChEBI" id="CHEBI:29950"/>
        <dbReference type="ChEBI" id="CHEBI:61963"/>
        <dbReference type="ChEBI" id="CHEBI:90618"/>
        <dbReference type="ChEBI" id="CHEBI:232372"/>
        <dbReference type="ChEBI" id="CHEBI:456215"/>
    </reaction>
</comment>
<comment type="pathway">
    <text evidence="1">Cofactor biosynthesis; thiamine diphosphate biosynthesis.</text>
</comment>
<comment type="subcellular location">
    <subcellularLocation>
        <location evidence="1">Cytoplasm</location>
    </subcellularLocation>
</comment>
<comment type="similarity">
    <text evidence="1">Belongs to the ThiI family.</text>
</comment>
<proteinExistence type="inferred from homology"/>
<feature type="chain" id="PRO_0000154844" description="Probable tRNA sulfurtransferase">
    <location>
        <begin position="1"/>
        <end position="405"/>
    </location>
</feature>
<feature type="domain" description="THUMP" evidence="1">
    <location>
        <begin position="60"/>
        <end position="165"/>
    </location>
</feature>
<feature type="binding site" evidence="1">
    <location>
        <begin position="183"/>
        <end position="184"/>
    </location>
    <ligand>
        <name>ATP</name>
        <dbReference type="ChEBI" id="CHEBI:30616"/>
    </ligand>
</feature>
<feature type="binding site" evidence="1">
    <location>
        <begin position="208"/>
        <end position="209"/>
    </location>
    <ligand>
        <name>ATP</name>
        <dbReference type="ChEBI" id="CHEBI:30616"/>
    </ligand>
</feature>
<feature type="binding site" evidence="1">
    <location>
        <position position="265"/>
    </location>
    <ligand>
        <name>ATP</name>
        <dbReference type="ChEBI" id="CHEBI:30616"/>
    </ligand>
</feature>
<feature type="binding site" evidence="1">
    <location>
        <position position="287"/>
    </location>
    <ligand>
        <name>ATP</name>
        <dbReference type="ChEBI" id="CHEBI:30616"/>
    </ligand>
</feature>
<feature type="binding site" evidence="1">
    <location>
        <position position="296"/>
    </location>
    <ligand>
        <name>ATP</name>
        <dbReference type="ChEBI" id="CHEBI:30616"/>
    </ligand>
</feature>
<organism>
    <name type="scientific">Lactiplantibacillus plantarum (strain ATCC BAA-793 / NCIMB 8826 / WCFS1)</name>
    <name type="common">Lactobacillus plantarum</name>
    <dbReference type="NCBI Taxonomy" id="220668"/>
    <lineage>
        <taxon>Bacteria</taxon>
        <taxon>Bacillati</taxon>
        <taxon>Bacillota</taxon>
        <taxon>Bacilli</taxon>
        <taxon>Lactobacillales</taxon>
        <taxon>Lactobacillaceae</taxon>
        <taxon>Lactiplantibacillus</taxon>
    </lineage>
</organism>
<sequence>MQYTEIMVRYGELSTKGKNRRNFIDSLGRNVRKALHDFPELKVHANRDRMHIMLNGEDADKVMGRLKLVFGIQNFSPSIRVDADMDAVYETAIAMVKAQFKPGMTFKIYTRRSDHQFEYDTNQINDMLGGQILDHVDGIQVKMKNPDIVLRVEVRLNGIFLSSETIQGAGGLPVGTAGKGMLMLSGGIDSPVAGYLGMKRGVDMEMVHFFSPPYTSEQALAKAKQLASTLASYSGSVKFIQIPFTEIQEEIKEKVPEGYLMTVQRRLMMRLMDAITRQRHGKAIFNGESLGQVASQTMDSMIAINDVTTLPVLRPVISMDKTEIIKIAEDIDTYDLSIMPFEDCCTIFAPPAPKTHPKLDRSRSYEERIDVEGLMARALAGVKMTEIKPGENYLNTQEDVFAELL</sequence>
<keyword id="KW-0067">ATP-binding</keyword>
<keyword id="KW-0963">Cytoplasm</keyword>
<keyword id="KW-0547">Nucleotide-binding</keyword>
<keyword id="KW-1185">Reference proteome</keyword>
<keyword id="KW-0694">RNA-binding</keyword>
<keyword id="KW-0784">Thiamine biosynthesis</keyword>
<keyword id="KW-0808">Transferase</keyword>
<keyword id="KW-0820">tRNA-binding</keyword>
<name>THII_LACPL</name>